<name>UVRC_METMP</name>
<proteinExistence type="inferred from homology"/>
<reference key="1">
    <citation type="journal article" date="2004" name="J. Bacteriol.">
        <title>Complete genome sequence of the genetically tractable hydrogenotrophic methanogen Methanococcus maripaludis.</title>
        <authorList>
            <person name="Hendrickson E.L."/>
            <person name="Kaul R."/>
            <person name="Zhou Y."/>
            <person name="Bovee D."/>
            <person name="Chapman P."/>
            <person name="Chung J."/>
            <person name="Conway de Macario E."/>
            <person name="Dodsworth J.A."/>
            <person name="Gillett W."/>
            <person name="Graham D.E."/>
            <person name="Hackett M."/>
            <person name="Haydock A.K."/>
            <person name="Kang A."/>
            <person name="Land M.L."/>
            <person name="Levy R."/>
            <person name="Lie T.J."/>
            <person name="Major T.A."/>
            <person name="Moore B.C."/>
            <person name="Porat I."/>
            <person name="Palmeiri A."/>
            <person name="Rouse G."/>
            <person name="Saenphimmachak C."/>
            <person name="Soell D."/>
            <person name="Van Dien S."/>
            <person name="Wang T."/>
            <person name="Whitman W.B."/>
            <person name="Xia Q."/>
            <person name="Zhang Y."/>
            <person name="Larimer F.W."/>
            <person name="Olson M.V."/>
            <person name="Leigh J.A."/>
        </authorList>
    </citation>
    <scope>NUCLEOTIDE SEQUENCE [LARGE SCALE GENOMIC DNA]</scope>
    <source>
        <strain>DSM 14266 / JCM 13030 / NBRC 101832 / S2 / LL</strain>
    </source>
</reference>
<gene>
    <name evidence="1" type="primary">uvrC</name>
    <name type="ordered locus">MMP0728</name>
</gene>
<organism>
    <name type="scientific">Methanococcus maripaludis (strain DSM 14266 / JCM 13030 / NBRC 101832 / S2 / LL)</name>
    <dbReference type="NCBI Taxonomy" id="267377"/>
    <lineage>
        <taxon>Archaea</taxon>
        <taxon>Methanobacteriati</taxon>
        <taxon>Methanobacteriota</taxon>
        <taxon>Methanomada group</taxon>
        <taxon>Methanococci</taxon>
        <taxon>Methanococcales</taxon>
        <taxon>Methanococcaceae</taxon>
        <taxon>Methanococcus</taxon>
    </lineage>
</organism>
<sequence>MINISDIPKNPGCYIYKNESGTVIYVGKAKNLKKRVSSYFNKKNHDPKTEKLVKSIYEMEFIVTDNEVEALILENTLIKKYSPKYNIDLKDSKNYAYIYISEENFPRIGISRNKSKKGKFYGPFTSAKERDYVLDVLKKTFKIRSCKNMHKRPCLRHHIKNCTAPCSGDITSKDYLNQIKKAEHILKGNIDSLIHELKNEMNEKSKNLQFEEALLIREEINAIERLKTRQNVKRDVKYNEDVISILEKSGKLHIMVFNVLKGTLFDRKYFEFDYTENFFEEFLIQYYSENDVPSEIIISELPKNLEEDNNEYSSDALLEYLSKKKGSKVAFKIPKQGEKKQLLDLAIKNLEIYVNGNEIKVQSLKNKLMLDKSPNIIECFDISHLSGTSTVGSVVQFRNGKPDKKNYRRFKIKTVSGIDDFKSISEVVFRRYSKLLEENLELPDLIIIDGGKGQLSSAFSELRKLKLKIPLISIAKREEEIYTPGIENPLPIKKNEKASLFIQEIRDEAHRFAINYNRLLRKKELIK</sequence>
<feature type="chain" id="PRO_0000264984" description="UvrABC system protein C">
    <location>
        <begin position="1"/>
        <end position="527"/>
    </location>
</feature>
<feature type="domain" description="GIY-YIG" evidence="1">
    <location>
        <begin position="9"/>
        <end position="87"/>
    </location>
</feature>
<feature type="domain" description="UVR" evidence="1">
    <location>
        <begin position="191"/>
        <end position="226"/>
    </location>
</feature>
<evidence type="ECO:0000255" key="1">
    <source>
        <dbReference type="HAMAP-Rule" id="MF_00203"/>
    </source>
</evidence>
<accession>Q6LZA1</accession>
<dbReference type="EMBL" id="BX950229">
    <property type="protein sequence ID" value="CAF30284.1"/>
    <property type="molecule type" value="Genomic_DNA"/>
</dbReference>
<dbReference type="RefSeq" id="WP_011170672.1">
    <property type="nucleotide sequence ID" value="NC_005791.1"/>
</dbReference>
<dbReference type="SMR" id="Q6LZA1"/>
<dbReference type="STRING" id="267377.MMP0728"/>
<dbReference type="EnsemblBacteria" id="CAF30284">
    <property type="protein sequence ID" value="CAF30284"/>
    <property type="gene ID" value="MMP0728"/>
</dbReference>
<dbReference type="GeneID" id="2762069"/>
<dbReference type="KEGG" id="mmp:MMP0728"/>
<dbReference type="PATRIC" id="fig|267377.15.peg.745"/>
<dbReference type="eggNOG" id="arCOG04753">
    <property type="taxonomic scope" value="Archaea"/>
</dbReference>
<dbReference type="HOGENOM" id="CLU_014841_3_2_2"/>
<dbReference type="OrthoDB" id="121419at2157"/>
<dbReference type="Proteomes" id="UP000000590">
    <property type="component" value="Chromosome"/>
</dbReference>
<dbReference type="GO" id="GO:0005737">
    <property type="term" value="C:cytoplasm"/>
    <property type="evidence" value="ECO:0007669"/>
    <property type="project" value="UniProtKB-SubCell"/>
</dbReference>
<dbReference type="GO" id="GO:0009380">
    <property type="term" value="C:excinuclease repair complex"/>
    <property type="evidence" value="ECO:0007669"/>
    <property type="project" value="InterPro"/>
</dbReference>
<dbReference type="GO" id="GO:0003677">
    <property type="term" value="F:DNA binding"/>
    <property type="evidence" value="ECO:0007669"/>
    <property type="project" value="UniProtKB-UniRule"/>
</dbReference>
<dbReference type="GO" id="GO:0009381">
    <property type="term" value="F:excinuclease ABC activity"/>
    <property type="evidence" value="ECO:0007669"/>
    <property type="project" value="UniProtKB-UniRule"/>
</dbReference>
<dbReference type="GO" id="GO:0006289">
    <property type="term" value="P:nucleotide-excision repair"/>
    <property type="evidence" value="ECO:0007669"/>
    <property type="project" value="UniProtKB-UniRule"/>
</dbReference>
<dbReference type="GO" id="GO:0009432">
    <property type="term" value="P:SOS response"/>
    <property type="evidence" value="ECO:0007669"/>
    <property type="project" value="UniProtKB-UniRule"/>
</dbReference>
<dbReference type="CDD" id="cd10434">
    <property type="entry name" value="GIY-YIG_UvrC_Cho"/>
    <property type="match status" value="1"/>
</dbReference>
<dbReference type="FunFam" id="3.30.420.340:FF:000001">
    <property type="entry name" value="UvrABC system protein C"/>
    <property type="match status" value="1"/>
</dbReference>
<dbReference type="FunFam" id="3.40.1440.10:FF:000001">
    <property type="entry name" value="UvrABC system protein C"/>
    <property type="match status" value="1"/>
</dbReference>
<dbReference type="Gene3D" id="3.40.1440.10">
    <property type="entry name" value="GIY-YIG endonuclease"/>
    <property type="match status" value="1"/>
</dbReference>
<dbReference type="Gene3D" id="4.10.860.10">
    <property type="entry name" value="UVR domain"/>
    <property type="match status" value="1"/>
</dbReference>
<dbReference type="Gene3D" id="3.30.420.340">
    <property type="entry name" value="UvrC, RNAse H endonuclease domain"/>
    <property type="match status" value="1"/>
</dbReference>
<dbReference type="HAMAP" id="MF_00203">
    <property type="entry name" value="UvrC"/>
    <property type="match status" value="1"/>
</dbReference>
<dbReference type="InterPro" id="IPR000305">
    <property type="entry name" value="GIY-YIG_endonuc"/>
</dbReference>
<dbReference type="InterPro" id="IPR035901">
    <property type="entry name" value="GIY-YIG_endonuc_sf"/>
</dbReference>
<dbReference type="InterPro" id="IPR047296">
    <property type="entry name" value="GIY-YIG_UvrC_Cho"/>
</dbReference>
<dbReference type="InterPro" id="IPR001943">
    <property type="entry name" value="UVR_dom"/>
</dbReference>
<dbReference type="InterPro" id="IPR036876">
    <property type="entry name" value="UVR_dom_sf"/>
</dbReference>
<dbReference type="InterPro" id="IPR050066">
    <property type="entry name" value="UvrABC_protein_C"/>
</dbReference>
<dbReference type="InterPro" id="IPR004791">
    <property type="entry name" value="UvrC"/>
</dbReference>
<dbReference type="InterPro" id="IPR001162">
    <property type="entry name" value="UvrC_RNase_H_dom"/>
</dbReference>
<dbReference type="InterPro" id="IPR038476">
    <property type="entry name" value="UvrC_RNase_H_dom_sf"/>
</dbReference>
<dbReference type="NCBIfam" id="TIGR00194">
    <property type="entry name" value="uvrC"/>
    <property type="match status" value="1"/>
</dbReference>
<dbReference type="PANTHER" id="PTHR30562:SF1">
    <property type="entry name" value="UVRABC SYSTEM PROTEIN C"/>
    <property type="match status" value="1"/>
</dbReference>
<dbReference type="PANTHER" id="PTHR30562">
    <property type="entry name" value="UVRC/OXIDOREDUCTASE"/>
    <property type="match status" value="1"/>
</dbReference>
<dbReference type="Pfam" id="PF01541">
    <property type="entry name" value="GIY-YIG"/>
    <property type="match status" value="1"/>
</dbReference>
<dbReference type="Pfam" id="PF02151">
    <property type="entry name" value="UVR"/>
    <property type="match status" value="1"/>
</dbReference>
<dbReference type="Pfam" id="PF22920">
    <property type="entry name" value="UvrC_RNaseH"/>
    <property type="match status" value="1"/>
</dbReference>
<dbReference type="Pfam" id="PF08459">
    <property type="entry name" value="UvrC_RNaseH_dom"/>
    <property type="match status" value="1"/>
</dbReference>
<dbReference type="SMART" id="SM00465">
    <property type="entry name" value="GIYc"/>
    <property type="match status" value="1"/>
</dbReference>
<dbReference type="SUPFAM" id="SSF46600">
    <property type="entry name" value="C-terminal UvrC-binding domain of UvrB"/>
    <property type="match status" value="1"/>
</dbReference>
<dbReference type="SUPFAM" id="SSF82771">
    <property type="entry name" value="GIY-YIG endonuclease"/>
    <property type="match status" value="1"/>
</dbReference>
<dbReference type="PROSITE" id="PS50164">
    <property type="entry name" value="GIY_YIG"/>
    <property type="match status" value="1"/>
</dbReference>
<dbReference type="PROSITE" id="PS50151">
    <property type="entry name" value="UVR"/>
    <property type="match status" value="1"/>
</dbReference>
<dbReference type="PROSITE" id="PS50165">
    <property type="entry name" value="UVRC"/>
    <property type="match status" value="1"/>
</dbReference>
<protein>
    <recommendedName>
        <fullName evidence="1">UvrABC system protein C</fullName>
        <shortName evidence="1">Protein UvrC</shortName>
    </recommendedName>
    <alternativeName>
        <fullName evidence="1">Excinuclease ABC subunit C</fullName>
    </alternativeName>
</protein>
<comment type="function">
    <text evidence="1">The UvrABC repair system catalyzes the recognition and processing of DNA lesions. UvrC both incises the 5' and 3' sides of the lesion. The N-terminal half is responsible for the 3' incision and the C-terminal half is responsible for the 5' incision.</text>
</comment>
<comment type="subunit">
    <text evidence="1">Interacts with UvrB in an incision complex.</text>
</comment>
<comment type="subcellular location">
    <subcellularLocation>
        <location evidence="1">Cytoplasm</location>
    </subcellularLocation>
</comment>
<comment type="similarity">
    <text evidence="1">Belongs to the UvrC family.</text>
</comment>
<keyword id="KW-0963">Cytoplasm</keyword>
<keyword id="KW-0227">DNA damage</keyword>
<keyword id="KW-0228">DNA excision</keyword>
<keyword id="KW-0234">DNA repair</keyword>
<keyword id="KW-0267">Excision nuclease</keyword>
<keyword id="KW-1185">Reference proteome</keyword>
<keyword id="KW-0742">SOS response</keyword>